<sequence length="370" mass="40840">MTALNKKWLSGLVAGALMAVSVGTLAAEQKTLHIYNWSDYIAPDTVANFEKETGIKVVYDVFDSNEVLEGKLMAGSTGFDLVVPSASFLERQLTAGVFQPLDKSKLPEWKNLDPELLKLVAKHDPDNKFAMPYMWATTGIGYNVDKVKAVLGENAPVDSWDLILKPENLEKLKSCGVSFLDAPEEVFATVLNYLGKDPNSTKADDYTGPATDLLLKLRPNIRYFHSSQYINDLANGDICVAIGWAGDVWQASNRAKEAKNGVNVSFSIPKEGAMAFFDVFAMPADAKNKDEAYQFLNYLLRPDVVAHISDHVFYANANKAATPLVSAEVRENPGIYPPADVRAKLFTLKVQDPKIDRVRTRAWTKVKSGK</sequence>
<reference key="1">
    <citation type="journal article" date="1993" name="J. Biol. Chem.">
        <title>Characteristics of the operon for a putrescine transport system that maps at 19 minutes on the Escherichia coli chromosome.</title>
        <authorList>
            <person name="Pistocchi R."/>
            <person name="Kashiwagi K."/>
            <person name="Miyamoto S."/>
            <person name="Nukui E."/>
            <person name="Sadakata Y."/>
            <person name="Kobayashi H."/>
            <person name="Igarashi K."/>
        </authorList>
    </citation>
    <scope>NUCLEOTIDE SEQUENCE [GENOMIC DNA]</scope>
    <scope>PROTEIN SEQUENCE OF 27-46</scope>
    <scope>FUNCTION</scope>
    <scope>SUBUNIT</scope>
    <scope>SUBCELLULAR LOCATION</scope>
</reference>
<reference key="2">
    <citation type="journal article" date="1996" name="DNA Res.">
        <title>A 718-kb DNA sequence of the Escherichia coli K-12 genome corresponding to the 12.7-28.0 min region on the linkage map.</title>
        <authorList>
            <person name="Oshima T."/>
            <person name="Aiba H."/>
            <person name="Baba T."/>
            <person name="Fujita K."/>
            <person name="Hayashi K."/>
            <person name="Honjo A."/>
            <person name="Ikemoto K."/>
            <person name="Inada T."/>
            <person name="Itoh T."/>
            <person name="Kajihara M."/>
            <person name="Kanai K."/>
            <person name="Kashimoto K."/>
            <person name="Kimura S."/>
            <person name="Kitagawa M."/>
            <person name="Makino K."/>
            <person name="Masuda S."/>
            <person name="Miki T."/>
            <person name="Mizobuchi K."/>
            <person name="Mori H."/>
            <person name="Motomura K."/>
            <person name="Nakamura Y."/>
            <person name="Nashimoto H."/>
            <person name="Nishio Y."/>
            <person name="Saito N."/>
            <person name="Sampei G."/>
            <person name="Seki Y."/>
            <person name="Tagami H."/>
            <person name="Takemoto K."/>
            <person name="Wada C."/>
            <person name="Yamamoto Y."/>
            <person name="Yano M."/>
            <person name="Horiuchi T."/>
        </authorList>
    </citation>
    <scope>NUCLEOTIDE SEQUENCE [LARGE SCALE GENOMIC DNA]</scope>
    <source>
        <strain>K12 / W3110 / ATCC 27325 / DSM 5911</strain>
    </source>
</reference>
<reference key="3">
    <citation type="journal article" date="1997" name="Science">
        <title>The complete genome sequence of Escherichia coli K-12.</title>
        <authorList>
            <person name="Blattner F.R."/>
            <person name="Plunkett G. III"/>
            <person name="Bloch C.A."/>
            <person name="Perna N.T."/>
            <person name="Burland V."/>
            <person name="Riley M."/>
            <person name="Collado-Vides J."/>
            <person name="Glasner J.D."/>
            <person name="Rode C.K."/>
            <person name="Mayhew G.F."/>
            <person name="Gregor J."/>
            <person name="Davis N.W."/>
            <person name="Kirkpatrick H.A."/>
            <person name="Goeden M.A."/>
            <person name="Rose D.J."/>
            <person name="Mau B."/>
            <person name="Shao Y."/>
        </authorList>
    </citation>
    <scope>NUCLEOTIDE SEQUENCE [LARGE SCALE GENOMIC DNA]</scope>
    <source>
        <strain>K12 / MG1655 / ATCC 47076</strain>
    </source>
</reference>
<reference key="4">
    <citation type="journal article" date="2006" name="Mol. Syst. Biol.">
        <title>Highly accurate genome sequences of Escherichia coli K-12 strains MG1655 and W3110.</title>
        <authorList>
            <person name="Hayashi K."/>
            <person name="Morooka N."/>
            <person name="Yamamoto Y."/>
            <person name="Fujita K."/>
            <person name="Isono K."/>
            <person name="Choi S."/>
            <person name="Ohtsubo E."/>
            <person name="Baba T."/>
            <person name="Wanner B.L."/>
            <person name="Mori H."/>
            <person name="Horiuchi T."/>
        </authorList>
    </citation>
    <scope>NUCLEOTIDE SEQUENCE [LARGE SCALE GENOMIC DNA]</scope>
    <source>
        <strain>K12 / W3110 / ATCC 27325 / DSM 5911</strain>
    </source>
</reference>
<reference key="5">
    <citation type="journal article" date="1997" name="Electrophoresis">
        <title>Comparing the predicted and observed properties of proteins encoded in the genome of Escherichia coli K-12.</title>
        <authorList>
            <person name="Link A.J."/>
            <person name="Robison K."/>
            <person name="Church G.M."/>
        </authorList>
    </citation>
    <scope>PROTEIN SEQUENCE OF 27-36</scope>
    <source>
        <strain>K12 / EMG2</strain>
    </source>
</reference>
<reference key="6">
    <citation type="journal article" date="2014" name="Amino Acids">
        <title>Properties of putrescine uptake by PotFGHI and PuuP and their physiological significance in Escherichia coli.</title>
        <authorList>
            <person name="Terui Y."/>
            <person name="Saroj S.D."/>
            <person name="Sakamoto A."/>
            <person name="Yoshida T."/>
            <person name="Higashi K."/>
            <person name="Kurihara S."/>
            <person name="Suzuki H."/>
            <person name="Toida T."/>
            <person name="Kashiwagi K."/>
            <person name="Igarashi K."/>
        </authorList>
    </citation>
    <scope>FUNCTION</scope>
    <scope>ACTIVITY REGULATION</scope>
    <scope>SUBUNIT</scope>
</reference>
<reference key="7">
    <citation type="journal article" date="1998" name="Acta Crystallogr. D">
        <title>Crystallization and preliminary X-ray analysis of the periplasmic receptor (PotF) of the putrescine transport system in Escherichia coli.</title>
        <authorList>
            <person name="Vassylyev D.G."/>
            <person name="Kashiwagi T."/>
            <person name="Tomitori H."/>
            <person name="Kashiwagi K."/>
            <person name="Igarashi K."/>
            <person name="Morikawa K."/>
        </authorList>
    </citation>
    <scope>X-RAY CRYSTALLOGRAPHY (2.3 ANGSTROMS)</scope>
</reference>
<reference key="8">
    <citation type="journal article" date="1998" name="J. Biol. Chem.">
        <title>Crystal structure and mutational analysis of the Escherichia coli putrescine receptor. Structural basis for substrate specificity.</title>
        <authorList>
            <person name="Vassylyev D.G."/>
            <person name="Tomitori H."/>
            <person name="Kashiwagi K."/>
            <person name="Morikawa K."/>
            <person name="Igarashi K."/>
        </authorList>
    </citation>
    <scope>X-RAY CRYSTALLOGRAPHY (2.3 ANGSTROMS) IN COMPLEX WITH PUTRESCINE</scope>
    <scope>DISULFIDE BOND</scope>
</reference>
<gene>
    <name evidence="5" type="primary">potF</name>
    <name type="ordered locus">b0854</name>
    <name type="ordered locus">JW0838</name>
</gene>
<accession>P31133</accession>
<accession>P77289</accession>
<keyword id="KW-0002">3D-structure</keyword>
<keyword id="KW-0903">Direct protein sequencing</keyword>
<keyword id="KW-1015">Disulfide bond</keyword>
<keyword id="KW-0574">Periplasm</keyword>
<keyword id="KW-1185">Reference proteome</keyword>
<keyword id="KW-0732">Signal</keyword>
<keyword id="KW-0813">Transport</keyword>
<evidence type="ECO:0000269" key="1">
    <source>
    </source>
</evidence>
<evidence type="ECO:0000269" key="2">
    <source>
    </source>
</evidence>
<evidence type="ECO:0000269" key="3">
    <source>
    </source>
</evidence>
<evidence type="ECO:0000269" key="4">
    <source>
    </source>
</evidence>
<evidence type="ECO:0000303" key="5">
    <source>
    </source>
</evidence>
<evidence type="ECO:0000305" key="6"/>
<evidence type="ECO:0007829" key="7">
    <source>
        <dbReference type="PDB" id="7OYS"/>
    </source>
</evidence>
<evidence type="ECO:0007829" key="8">
    <source>
        <dbReference type="PDB" id="7OYW"/>
    </source>
</evidence>
<name>POTF_ECOLI</name>
<proteinExistence type="evidence at protein level"/>
<organism>
    <name type="scientific">Escherichia coli (strain K12)</name>
    <dbReference type="NCBI Taxonomy" id="83333"/>
    <lineage>
        <taxon>Bacteria</taxon>
        <taxon>Pseudomonadati</taxon>
        <taxon>Pseudomonadota</taxon>
        <taxon>Gammaproteobacteria</taxon>
        <taxon>Enterobacterales</taxon>
        <taxon>Enterobacteriaceae</taxon>
        <taxon>Escherichia</taxon>
    </lineage>
</organism>
<dbReference type="EMBL" id="M93239">
    <property type="protein sequence ID" value="AAA24409.1"/>
    <property type="molecule type" value="Genomic_DNA"/>
</dbReference>
<dbReference type="EMBL" id="U00096">
    <property type="protein sequence ID" value="AAC73941.1"/>
    <property type="molecule type" value="Genomic_DNA"/>
</dbReference>
<dbReference type="EMBL" id="AP009048">
    <property type="protein sequence ID" value="BAA35565.1"/>
    <property type="molecule type" value="Genomic_DNA"/>
</dbReference>
<dbReference type="PIR" id="F64823">
    <property type="entry name" value="F64823"/>
</dbReference>
<dbReference type="RefSeq" id="NP_415375.1">
    <property type="nucleotide sequence ID" value="NC_000913.3"/>
</dbReference>
<dbReference type="RefSeq" id="WP_000126072.1">
    <property type="nucleotide sequence ID" value="NZ_SSZK01000002.1"/>
</dbReference>
<dbReference type="PDB" id="1A99">
    <property type="method" value="X-ray"/>
    <property type="resolution" value="2.20 A"/>
    <property type="chains" value="A/B/C/D=27-370"/>
</dbReference>
<dbReference type="PDB" id="6YE0">
    <property type="method" value="X-ray"/>
    <property type="resolution" value="1.63 A"/>
    <property type="chains" value="A/B=27-370"/>
</dbReference>
<dbReference type="PDB" id="6YE6">
    <property type="method" value="X-ray"/>
    <property type="resolution" value="1.56 A"/>
    <property type="chains" value="A/B=27-370"/>
</dbReference>
<dbReference type="PDB" id="6YE7">
    <property type="method" value="X-ray"/>
    <property type="resolution" value="1.60 A"/>
    <property type="chains" value="A/B=27-370"/>
</dbReference>
<dbReference type="PDB" id="6YE8">
    <property type="method" value="X-ray"/>
    <property type="resolution" value="1.50 A"/>
    <property type="chains" value="A/B=27-370"/>
</dbReference>
<dbReference type="PDB" id="6YEB">
    <property type="method" value="X-ray"/>
    <property type="resolution" value="1.97 A"/>
    <property type="chains" value="A/B=27-370"/>
</dbReference>
<dbReference type="PDB" id="6YEC">
    <property type="method" value="X-ray"/>
    <property type="resolution" value="2.09 A"/>
    <property type="chains" value="A/B=27-370"/>
</dbReference>
<dbReference type="PDB" id="6YED">
    <property type="method" value="X-ray"/>
    <property type="resolution" value="2.18 A"/>
    <property type="chains" value="A/B=27-370"/>
</dbReference>
<dbReference type="PDB" id="7OYS">
    <property type="method" value="X-ray"/>
    <property type="resolution" value="1.57 A"/>
    <property type="chains" value="A=27-370"/>
</dbReference>
<dbReference type="PDB" id="7OYT">
    <property type="method" value="X-ray"/>
    <property type="resolution" value="1.60 A"/>
    <property type="chains" value="A=27-370"/>
</dbReference>
<dbReference type="PDB" id="7OYU">
    <property type="method" value="X-ray"/>
    <property type="resolution" value="1.95 A"/>
    <property type="chains" value="A=27-370"/>
</dbReference>
<dbReference type="PDB" id="7OYV">
    <property type="method" value="X-ray"/>
    <property type="resolution" value="1.90 A"/>
    <property type="chains" value="A/B=27-370"/>
</dbReference>
<dbReference type="PDB" id="7OYW">
    <property type="method" value="X-ray"/>
    <property type="resolution" value="1.28 A"/>
    <property type="chains" value="A/B=27-370"/>
</dbReference>
<dbReference type="PDB" id="7OYX">
    <property type="method" value="X-ray"/>
    <property type="resolution" value="1.37 A"/>
    <property type="chains" value="A/B=27-370"/>
</dbReference>
<dbReference type="PDB" id="7OYY">
    <property type="method" value="X-ray"/>
    <property type="resolution" value="1.36 A"/>
    <property type="chains" value="A=27-370"/>
</dbReference>
<dbReference type="PDB" id="7OYZ">
    <property type="method" value="X-ray"/>
    <property type="resolution" value="1.49 A"/>
    <property type="chains" value="A=27-370"/>
</dbReference>
<dbReference type="PDB" id="8ASZ">
    <property type="method" value="X-ray"/>
    <property type="resolution" value="1.28 A"/>
    <property type="chains" value="A=27-370"/>
</dbReference>
<dbReference type="PDB" id="8AT0">
    <property type="method" value="X-ray"/>
    <property type="resolution" value="2.00 A"/>
    <property type="chains" value="A/B=29-370"/>
</dbReference>
<dbReference type="PDBsum" id="1A99"/>
<dbReference type="PDBsum" id="6YE0"/>
<dbReference type="PDBsum" id="6YE6"/>
<dbReference type="PDBsum" id="6YE7"/>
<dbReference type="PDBsum" id="6YE8"/>
<dbReference type="PDBsum" id="6YEB"/>
<dbReference type="PDBsum" id="6YEC"/>
<dbReference type="PDBsum" id="6YED"/>
<dbReference type="PDBsum" id="7OYS"/>
<dbReference type="PDBsum" id="7OYT"/>
<dbReference type="PDBsum" id="7OYU"/>
<dbReference type="PDBsum" id="7OYV"/>
<dbReference type="PDBsum" id="7OYW"/>
<dbReference type="PDBsum" id="7OYX"/>
<dbReference type="PDBsum" id="7OYY"/>
<dbReference type="PDBsum" id="7OYZ"/>
<dbReference type="PDBsum" id="8ASZ"/>
<dbReference type="PDBsum" id="8AT0"/>
<dbReference type="SMR" id="P31133"/>
<dbReference type="BioGRID" id="4259994">
    <property type="interactions" value="15"/>
</dbReference>
<dbReference type="ComplexPortal" id="CPX-4384">
    <property type="entry name" value="Putrescine ABC transporter complex"/>
</dbReference>
<dbReference type="DIP" id="DIP-10531N"/>
<dbReference type="FunCoup" id="P31133">
    <property type="interactions" value="237"/>
</dbReference>
<dbReference type="IntAct" id="P31133">
    <property type="interactions" value="2"/>
</dbReference>
<dbReference type="STRING" id="511145.b0854"/>
<dbReference type="DrugBank" id="DB01917">
    <property type="generic name" value="Putrescine"/>
</dbReference>
<dbReference type="TCDB" id="3.A.1.11.2">
    <property type="family name" value="the atp-binding cassette (abc) superfamily"/>
</dbReference>
<dbReference type="jPOST" id="P31133"/>
<dbReference type="PaxDb" id="511145-b0854"/>
<dbReference type="EnsemblBacteria" id="AAC73941">
    <property type="protein sequence ID" value="AAC73941"/>
    <property type="gene ID" value="b0854"/>
</dbReference>
<dbReference type="GeneID" id="945480"/>
<dbReference type="KEGG" id="ecj:JW0838"/>
<dbReference type="KEGG" id="eco:b0854"/>
<dbReference type="KEGG" id="ecoc:C3026_05330"/>
<dbReference type="PATRIC" id="fig|1411691.4.peg.1423"/>
<dbReference type="EchoBASE" id="EB1586"/>
<dbReference type="eggNOG" id="COG0687">
    <property type="taxonomic scope" value="Bacteria"/>
</dbReference>
<dbReference type="HOGENOM" id="CLU_026974_1_4_6"/>
<dbReference type="InParanoid" id="P31133"/>
<dbReference type="OMA" id="SNWTEYM"/>
<dbReference type="OrthoDB" id="9769319at2"/>
<dbReference type="PhylomeDB" id="P31133"/>
<dbReference type="BioCyc" id="EcoCyc:POTF-MONOMER"/>
<dbReference type="BioCyc" id="MetaCyc:POTF-MONOMER"/>
<dbReference type="EvolutionaryTrace" id="P31133"/>
<dbReference type="PRO" id="PR:P31133"/>
<dbReference type="Proteomes" id="UP000000625">
    <property type="component" value="Chromosome"/>
</dbReference>
<dbReference type="GO" id="GO:0055052">
    <property type="term" value="C:ATP-binding cassette (ABC) transporter complex, substrate-binding subunit-containing"/>
    <property type="evidence" value="ECO:0000303"/>
    <property type="project" value="ComplexPortal"/>
</dbReference>
<dbReference type="GO" id="GO:0016020">
    <property type="term" value="C:membrane"/>
    <property type="evidence" value="ECO:0000303"/>
    <property type="project" value="ComplexPortal"/>
</dbReference>
<dbReference type="GO" id="GO:0030288">
    <property type="term" value="C:outer membrane-bounded periplasmic space"/>
    <property type="evidence" value="ECO:0000314"/>
    <property type="project" value="EcoCyc"/>
</dbReference>
<dbReference type="GO" id="GO:0019810">
    <property type="term" value="F:putrescine binding"/>
    <property type="evidence" value="ECO:0000314"/>
    <property type="project" value="EcoCyc"/>
</dbReference>
<dbReference type="GO" id="GO:0015847">
    <property type="term" value="P:putrescine transport"/>
    <property type="evidence" value="ECO:0000314"/>
    <property type="project" value="EcoCyc"/>
</dbReference>
<dbReference type="CDD" id="cd13659">
    <property type="entry name" value="PBP2_PotF"/>
    <property type="match status" value="1"/>
</dbReference>
<dbReference type="FunFam" id="3.40.190.10:FF:000049">
    <property type="entry name" value="Putrescine-binding periplasmic protein"/>
    <property type="match status" value="1"/>
</dbReference>
<dbReference type="Gene3D" id="3.40.190.10">
    <property type="entry name" value="Periplasmic binding protein-like II"/>
    <property type="match status" value="2"/>
</dbReference>
<dbReference type="InterPro" id="IPR006059">
    <property type="entry name" value="SBP"/>
</dbReference>
<dbReference type="InterPro" id="IPR001188">
    <property type="entry name" value="Sperm_putr-bd"/>
</dbReference>
<dbReference type="NCBIfam" id="NF007962">
    <property type="entry name" value="PRK10682.1"/>
    <property type="match status" value="1"/>
</dbReference>
<dbReference type="PANTHER" id="PTHR30222:SF18">
    <property type="entry name" value="BIFUNCTIONAL POLYHYDROXYBUTYRATE SYNTHASE _ ABC TRANSPORTER PERIPLASMIC BINDING PROTEIN-RELATED"/>
    <property type="match status" value="1"/>
</dbReference>
<dbReference type="PANTHER" id="PTHR30222">
    <property type="entry name" value="SPERMIDINE/PUTRESCINE-BINDING PERIPLASMIC PROTEIN"/>
    <property type="match status" value="1"/>
</dbReference>
<dbReference type="Pfam" id="PF13416">
    <property type="entry name" value="SBP_bac_8"/>
    <property type="match status" value="1"/>
</dbReference>
<dbReference type="PIRSF" id="PIRSF019574">
    <property type="entry name" value="Periplasmic_polyamine_BP"/>
    <property type="match status" value="1"/>
</dbReference>
<dbReference type="PRINTS" id="PR00909">
    <property type="entry name" value="SPERMDNBNDNG"/>
</dbReference>
<dbReference type="SUPFAM" id="SSF53850">
    <property type="entry name" value="Periplasmic binding protein-like II"/>
    <property type="match status" value="1"/>
</dbReference>
<comment type="function">
    <text evidence="1 2 4">Part of the ABC transporter complex PotFGHI involved in putrescine uptake (PubMed:23719730, PubMed:8416922). Binds putrescine (PubMed:8416922, PubMed:9651355). Imports putrescine for maintenance of the optimal concentration of polyamines necessary for cell growth in the presence of glucose (PubMed:23719730).</text>
</comment>
<comment type="activity regulation">
    <text evidence="1">Transport is feedback inhibited by intracellular polyamines.</text>
</comment>
<comment type="subunit">
    <text evidence="1 2">The complex is composed of two ATP-binding proteins (PotG), two transmembrane proteins (PotH and PotI) and a solute-binding protein (PotF).</text>
</comment>
<comment type="subcellular location">
    <subcellularLocation>
        <location evidence="2">Periplasm</location>
    </subcellularLocation>
</comment>
<comment type="similarity">
    <text evidence="6">Belongs to the bacterial solute-binding protein PotD/PotF family.</text>
</comment>
<feature type="signal peptide" evidence="2 3">
    <location>
        <begin position="1"/>
        <end position="26"/>
    </location>
</feature>
<feature type="chain" id="PRO_0000031842" description="Putrescine-binding periplasmic protein PotF">
    <location>
        <begin position="27"/>
        <end position="370"/>
    </location>
</feature>
<feature type="binding site" evidence="4">
    <location>
        <position position="38"/>
    </location>
    <ligand>
        <name>putrescine</name>
        <dbReference type="ChEBI" id="CHEBI:326268"/>
    </ligand>
</feature>
<feature type="binding site" evidence="4">
    <location>
        <position position="247"/>
    </location>
    <ligand>
        <name>putrescine</name>
        <dbReference type="ChEBI" id="CHEBI:326268"/>
    </ligand>
</feature>
<feature type="binding site" evidence="4">
    <location>
        <position position="278"/>
    </location>
    <ligand>
        <name>putrescine</name>
        <dbReference type="ChEBI" id="CHEBI:326268"/>
    </ligand>
</feature>
<feature type="disulfide bond" evidence="4">
    <location>
        <begin position="175"/>
        <end position="239"/>
    </location>
</feature>
<feature type="sequence conflict" description="In Ref. 5; AA sequence." evidence="6" ref="5">
    <original>Q</original>
    <variation>N</variation>
    <location>
        <position position="29"/>
    </location>
</feature>
<feature type="sequence conflict" description="In Ref. 1; AAA24409." evidence="6" ref="1">
    <original>KL</original>
    <variation>NV</variation>
    <location>
        <begin position="216"/>
        <end position="217"/>
    </location>
</feature>
<feature type="strand" evidence="8">
    <location>
        <begin position="31"/>
        <end position="39"/>
    </location>
</feature>
<feature type="helix" evidence="8">
    <location>
        <begin position="45"/>
        <end position="53"/>
    </location>
</feature>
<feature type="strand" evidence="8">
    <location>
        <begin position="56"/>
        <end position="63"/>
    </location>
</feature>
<feature type="helix" evidence="8">
    <location>
        <begin position="65"/>
        <end position="74"/>
    </location>
</feature>
<feature type="strand" evidence="8">
    <location>
        <begin position="80"/>
        <end position="82"/>
    </location>
</feature>
<feature type="helix" evidence="8">
    <location>
        <begin position="86"/>
        <end position="92"/>
    </location>
</feature>
<feature type="helix" evidence="8">
    <location>
        <begin position="93"/>
        <end position="95"/>
    </location>
</feature>
<feature type="helix" evidence="8">
    <location>
        <begin position="103"/>
        <end position="105"/>
    </location>
</feature>
<feature type="helix" evidence="8">
    <location>
        <begin position="109"/>
        <end position="111"/>
    </location>
</feature>
<feature type="helix" evidence="8">
    <location>
        <begin position="114"/>
        <end position="120"/>
    </location>
</feature>
<feature type="turn" evidence="8">
    <location>
        <begin position="121"/>
        <end position="123"/>
    </location>
</feature>
<feature type="helix" evidence="8">
    <location>
        <begin position="125"/>
        <end position="127"/>
    </location>
</feature>
<feature type="strand" evidence="8">
    <location>
        <begin position="129"/>
        <end position="143"/>
    </location>
</feature>
<feature type="helix" evidence="8">
    <location>
        <begin position="144"/>
        <end position="151"/>
    </location>
</feature>
<feature type="helix" evidence="8">
    <location>
        <begin position="161"/>
        <end position="164"/>
    </location>
</feature>
<feature type="helix" evidence="8">
    <location>
        <begin position="166"/>
        <end position="172"/>
    </location>
</feature>
<feature type="turn" evidence="8">
    <location>
        <begin position="173"/>
        <end position="175"/>
    </location>
</feature>
<feature type="strand" evidence="8">
    <location>
        <begin position="177"/>
        <end position="179"/>
    </location>
</feature>
<feature type="helix" evidence="8">
    <location>
        <begin position="183"/>
        <end position="193"/>
    </location>
</feature>
<feature type="helix" evidence="8">
    <location>
        <begin position="203"/>
        <end position="207"/>
    </location>
</feature>
<feature type="helix" evidence="8">
    <location>
        <begin position="209"/>
        <end position="217"/>
    </location>
</feature>
<feature type="helix" evidence="8">
    <location>
        <begin position="218"/>
        <end position="220"/>
    </location>
</feature>
<feature type="helix" evidence="8">
    <location>
        <begin position="229"/>
        <end position="234"/>
    </location>
</feature>
<feature type="strand" evidence="8">
    <location>
        <begin position="239"/>
        <end position="244"/>
    </location>
</feature>
<feature type="helix" evidence="8">
    <location>
        <begin position="245"/>
        <end position="258"/>
    </location>
</feature>
<feature type="strand" evidence="8">
    <location>
        <begin position="264"/>
        <end position="267"/>
    </location>
</feature>
<feature type="strand" evidence="8">
    <location>
        <begin position="273"/>
        <end position="281"/>
    </location>
</feature>
<feature type="helix" evidence="8">
    <location>
        <begin position="289"/>
        <end position="299"/>
    </location>
</feature>
<feature type="helix" evidence="8">
    <location>
        <begin position="302"/>
        <end position="312"/>
    </location>
</feature>
<feature type="strand" evidence="8">
    <location>
        <begin position="315"/>
        <end position="318"/>
    </location>
</feature>
<feature type="turn" evidence="8">
    <location>
        <begin position="319"/>
        <end position="321"/>
    </location>
</feature>
<feature type="helix" evidence="8">
    <location>
        <begin position="322"/>
        <end position="324"/>
    </location>
</feature>
<feature type="helix" evidence="8">
    <location>
        <begin position="327"/>
        <end position="330"/>
    </location>
</feature>
<feature type="turn" evidence="8">
    <location>
        <begin position="333"/>
        <end position="335"/>
    </location>
</feature>
<feature type="helix" evidence="8">
    <location>
        <begin position="339"/>
        <end position="342"/>
    </location>
</feature>
<feature type="strand" evidence="7">
    <location>
        <begin position="345"/>
        <end position="347"/>
    </location>
</feature>
<feature type="helix" evidence="8">
    <location>
        <begin position="353"/>
        <end position="367"/>
    </location>
</feature>
<feature type="turn" evidence="8">
    <location>
        <begin position="368"/>
        <end position="370"/>
    </location>
</feature>
<protein>
    <recommendedName>
        <fullName>Putrescine-binding periplasmic protein PotF</fullName>
    </recommendedName>
</protein>